<feature type="chain" id="PRO_0000072330" description="Ceramide-binding protein svf1">
    <location>
        <begin position="1"/>
        <end position="380"/>
    </location>
</feature>
<organism>
    <name type="scientific">Emericella nidulans (strain FGSC A4 / ATCC 38163 / CBS 112.46 / NRRL 194 / M139)</name>
    <name type="common">Aspergillus nidulans</name>
    <dbReference type="NCBI Taxonomy" id="227321"/>
    <lineage>
        <taxon>Eukaryota</taxon>
        <taxon>Fungi</taxon>
        <taxon>Dikarya</taxon>
        <taxon>Ascomycota</taxon>
        <taxon>Pezizomycotina</taxon>
        <taxon>Eurotiomycetes</taxon>
        <taxon>Eurotiomycetidae</taxon>
        <taxon>Eurotiales</taxon>
        <taxon>Aspergillaceae</taxon>
        <taxon>Aspergillus</taxon>
        <taxon>Aspergillus subgen. Nidulantes</taxon>
    </lineage>
</organism>
<reference key="1">
    <citation type="journal article" date="2005" name="Nature">
        <title>Sequencing of Aspergillus nidulans and comparative analysis with A. fumigatus and A. oryzae.</title>
        <authorList>
            <person name="Galagan J.E."/>
            <person name="Calvo S.E."/>
            <person name="Cuomo C."/>
            <person name="Ma L.-J."/>
            <person name="Wortman J.R."/>
            <person name="Batzoglou S."/>
            <person name="Lee S.-I."/>
            <person name="Bastuerkmen M."/>
            <person name="Spevak C.C."/>
            <person name="Clutterbuck J."/>
            <person name="Kapitonov V."/>
            <person name="Jurka J."/>
            <person name="Scazzocchio C."/>
            <person name="Farman M.L."/>
            <person name="Butler J."/>
            <person name="Purcell S."/>
            <person name="Harris S."/>
            <person name="Braus G.H."/>
            <person name="Draht O."/>
            <person name="Busch S."/>
            <person name="D'Enfert C."/>
            <person name="Bouchier C."/>
            <person name="Goldman G.H."/>
            <person name="Bell-Pedersen D."/>
            <person name="Griffiths-Jones S."/>
            <person name="Doonan J.H."/>
            <person name="Yu J."/>
            <person name="Vienken K."/>
            <person name="Pain A."/>
            <person name="Freitag M."/>
            <person name="Selker E.U."/>
            <person name="Archer D.B."/>
            <person name="Penalva M.A."/>
            <person name="Oakley B.R."/>
            <person name="Momany M."/>
            <person name="Tanaka T."/>
            <person name="Kumagai T."/>
            <person name="Asai K."/>
            <person name="Machida M."/>
            <person name="Nierman W.C."/>
            <person name="Denning D.W."/>
            <person name="Caddick M.X."/>
            <person name="Hynes M."/>
            <person name="Paoletti M."/>
            <person name="Fischer R."/>
            <person name="Miller B.L."/>
            <person name="Dyer P.S."/>
            <person name="Sachs M.S."/>
            <person name="Osmani S.A."/>
            <person name="Birren B.W."/>
        </authorList>
    </citation>
    <scope>NUCLEOTIDE SEQUENCE [LARGE SCALE GENOMIC DNA]</scope>
    <source>
        <strain>FGSC A4 / ATCC 38163 / CBS 112.46 / NRRL 194 / M139</strain>
    </source>
</reference>
<reference key="2">
    <citation type="journal article" date="2009" name="Fungal Genet. Biol.">
        <title>The 2008 update of the Aspergillus nidulans genome annotation: a community effort.</title>
        <authorList>
            <person name="Wortman J.R."/>
            <person name="Gilsenan J.M."/>
            <person name="Joardar V."/>
            <person name="Deegan J."/>
            <person name="Clutterbuck J."/>
            <person name="Andersen M.R."/>
            <person name="Archer D."/>
            <person name="Bencina M."/>
            <person name="Braus G."/>
            <person name="Coutinho P."/>
            <person name="von Dohren H."/>
            <person name="Doonan J."/>
            <person name="Driessen A.J."/>
            <person name="Durek P."/>
            <person name="Espeso E."/>
            <person name="Fekete E."/>
            <person name="Flipphi M."/>
            <person name="Estrada C.G."/>
            <person name="Geysens S."/>
            <person name="Goldman G."/>
            <person name="de Groot P.W."/>
            <person name="Hansen K."/>
            <person name="Harris S.D."/>
            <person name="Heinekamp T."/>
            <person name="Helmstaedt K."/>
            <person name="Henrissat B."/>
            <person name="Hofmann G."/>
            <person name="Homan T."/>
            <person name="Horio T."/>
            <person name="Horiuchi H."/>
            <person name="James S."/>
            <person name="Jones M."/>
            <person name="Karaffa L."/>
            <person name="Karanyi Z."/>
            <person name="Kato M."/>
            <person name="Keller N."/>
            <person name="Kelly D.E."/>
            <person name="Kiel J.A."/>
            <person name="Kim J.M."/>
            <person name="van der Klei I.J."/>
            <person name="Klis F.M."/>
            <person name="Kovalchuk A."/>
            <person name="Krasevec N."/>
            <person name="Kubicek C.P."/>
            <person name="Liu B."/>
            <person name="Maccabe A."/>
            <person name="Meyer V."/>
            <person name="Mirabito P."/>
            <person name="Miskei M."/>
            <person name="Mos M."/>
            <person name="Mullins J."/>
            <person name="Nelson D.R."/>
            <person name="Nielsen J."/>
            <person name="Oakley B.R."/>
            <person name="Osmani S.A."/>
            <person name="Pakula T."/>
            <person name="Paszewski A."/>
            <person name="Paulsen I."/>
            <person name="Pilsyk S."/>
            <person name="Pocsi I."/>
            <person name="Punt P.J."/>
            <person name="Ram A.F."/>
            <person name="Ren Q."/>
            <person name="Robellet X."/>
            <person name="Robson G."/>
            <person name="Seiboth B."/>
            <person name="van Solingen P."/>
            <person name="Specht T."/>
            <person name="Sun J."/>
            <person name="Taheri-Talesh N."/>
            <person name="Takeshita N."/>
            <person name="Ussery D."/>
            <person name="vanKuyk P.A."/>
            <person name="Visser H."/>
            <person name="van de Vondervoort P.J."/>
            <person name="de Vries R.P."/>
            <person name="Walton J."/>
            <person name="Xiang X."/>
            <person name="Xiong Y."/>
            <person name="Zeng A.P."/>
            <person name="Brandt B.W."/>
            <person name="Cornell M.J."/>
            <person name="van den Hondel C.A."/>
            <person name="Visser J."/>
            <person name="Oliver S.G."/>
            <person name="Turner G."/>
        </authorList>
    </citation>
    <scope>GENOME REANNOTATION</scope>
    <source>
        <strain>FGSC A4 / ATCC 38163 / CBS 112.46 / NRRL 194 / M139</strain>
    </source>
</reference>
<protein>
    <recommendedName>
        <fullName evidence="2">Ceramide-binding protein svf1</fullName>
    </recommendedName>
    <alternativeName>
        <fullName>Survival factor 1</fullName>
    </alternativeName>
</protein>
<keyword id="KW-0963">Cytoplasm</keyword>
<keyword id="KW-0256">Endoplasmic reticulum</keyword>
<keyword id="KW-0333">Golgi apparatus</keyword>
<keyword id="KW-0445">Lipid transport</keyword>
<keyword id="KW-0472">Membrane</keyword>
<keyword id="KW-0539">Nucleus</keyword>
<keyword id="KW-1185">Reference proteome</keyword>
<keyword id="KW-0813">Transport</keyword>
<sequence>MNWLKSTLSAVAGTQEPIYGPEAIQPVSQQQTEDAPYTELTKHDLRWRAYQYTNVETQTYYAMADNGTLVMVQIIYSNIAGIHTTAQFNCKIFNTSGDGTPHIWFSDPLYNHMFDESMSSFAADNISLSLNEEGNAYTLKSAVNEGCLVDLTFNRAAPGFAIGKDGTTYFGTDPQNPWGSMRHMFWPRCNVTGTITTKEKVHDMTGRGMFSQALQGMKPHHAASRWNFINFQTPSFSAIMMEFTTPPSYGSTVVNVGGIAKDGEIIYAGTTNSATHTEASQDETSDWPEPKSIKWVWEGKTKDGKTVTAEVDGPLGPKLDRIDVMAEVPGFIKTIAGSVAGARPYIFQYSPQQKLSLKLKVGDEEFTEEGSMFSEATFIS</sequence>
<comment type="function">
    <text evidence="1">Ceramide-binding protein that may transfer ceramides from the endoplasmic reticulum membrane to the cis-Golgi network membrane, and is thereby required for the biosynthesis of complex sphingolipids.</text>
</comment>
<comment type="subcellular location">
    <subcellularLocation>
        <location evidence="1">Golgi apparatus</location>
        <location evidence="1">cis-Golgi network membrane</location>
        <topology evidence="1">Peripheral membrane protein</topology>
    </subcellularLocation>
    <subcellularLocation>
        <location evidence="1">Endoplasmic reticulum membrane</location>
        <topology evidence="1">Peripheral membrane protein</topology>
    </subcellularLocation>
    <subcellularLocation>
        <location evidence="1">Cytoplasm</location>
    </subcellularLocation>
    <subcellularLocation>
        <location evidence="1">Nucleus</location>
    </subcellularLocation>
    <text evidence="1">Localizes to the interface between the cis-Golgi network and endoplasmic reticulum exit sites.</text>
</comment>
<comment type="similarity">
    <text evidence="2">Belongs to the SVF1 family.</text>
</comment>
<comment type="sequence caution" evidence="2">
    <conflict type="erroneous gene model prediction">
        <sequence resource="EMBL-CDS" id="EAA65295"/>
    </conflict>
</comment>
<proteinExistence type="inferred from homology"/>
<gene>
    <name type="primary">svf1</name>
    <name type="ORF">AN0117</name>
</gene>
<evidence type="ECO:0000250" key="1">
    <source>
        <dbReference type="UniProtKB" id="Q05515"/>
    </source>
</evidence>
<evidence type="ECO:0000305" key="2"/>
<accession>Q5BH63</accession>
<accession>C8VQK7</accession>
<dbReference type="EMBL" id="AACD01000004">
    <property type="protein sequence ID" value="EAA65295.1"/>
    <property type="status" value="ALT_SEQ"/>
    <property type="molecule type" value="Genomic_DNA"/>
</dbReference>
<dbReference type="EMBL" id="BN001308">
    <property type="protein sequence ID" value="CBF90165.1"/>
    <property type="molecule type" value="Genomic_DNA"/>
</dbReference>
<dbReference type="RefSeq" id="XP_657721.1">
    <property type="nucleotide sequence ID" value="XM_652629.1"/>
</dbReference>
<dbReference type="SMR" id="Q5BH63"/>
<dbReference type="FunCoup" id="Q5BH63">
    <property type="interactions" value="103"/>
</dbReference>
<dbReference type="STRING" id="227321.Q5BH63"/>
<dbReference type="EnsemblFungi" id="CBF90165">
    <property type="protein sequence ID" value="CBF90165"/>
    <property type="gene ID" value="ANIA_00117"/>
</dbReference>
<dbReference type="VEuPathDB" id="FungiDB:AN0117"/>
<dbReference type="eggNOG" id="ENOG502QQY3">
    <property type="taxonomic scope" value="Eukaryota"/>
</dbReference>
<dbReference type="HOGENOM" id="CLU_498765_0_0_1"/>
<dbReference type="InParanoid" id="Q5BH63"/>
<dbReference type="OMA" id="AFWPRCV"/>
<dbReference type="OrthoDB" id="2590239at2759"/>
<dbReference type="Proteomes" id="UP000000560">
    <property type="component" value="Chromosome VIII"/>
</dbReference>
<dbReference type="GO" id="GO:0033106">
    <property type="term" value="C:cis-Golgi network membrane"/>
    <property type="evidence" value="ECO:0000250"/>
    <property type="project" value="UniProtKB"/>
</dbReference>
<dbReference type="GO" id="GO:0005737">
    <property type="term" value="C:cytoplasm"/>
    <property type="evidence" value="ECO:0000250"/>
    <property type="project" value="UniProtKB"/>
</dbReference>
<dbReference type="GO" id="GO:0005789">
    <property type="term" value="C:endoplasmic reticulum membrane"/>
    <property type="evidence" value="ECO:0007669"/>
    <property type="project" value="UniProtKB-SubCell"/>
</dbReference>
<dbReference type="GO" id="GO:0005634">
    <property type="term" value="C:nucleus"/>
    <property type="evidence" value="ECO:0007669"/>
    <property type="project" value="UniProtKB-SubCell"/>
</dbReference>
<dbReference type="GO" id="GO:0097001">
    <property type="term" value="F:ceramide binding"/>
    <property type="evidence" value="ECO:0000250"/>
    <property type="project" value="UniProtKB"/>
</dbReference>
<dbReference type="GO" id="GO:0035621">
    <property type="term" value="P:ER to Golgi ceramide transport"/>
    <property type="evidence" value="ECO:0000250"/>
    <property type="project" value="UniProtKB"/>
</dbReference>
<dbReference type="GO" id="GO:0006979">
    <property type="term" value="P:response to oxidative stress"/>
    <property type="evidence" value="ECO:0007669"/>
    <property type="project" value="InterPro"/>
</dbReference>
<dbReference type="FunFam" id="2.40.370.10:FF:000001">
    <property type="entry name" value="Survival factor 1"/>
    <property type="match status" value="1"/>
</dbReference>
<dbReference type="Gene3D" id="2.40.370.10">
    <property type="entry name" value="AttH-like domain"/>
    <property type="match status" value="1"/>
</dbReference>
<dbReference type="InterPro" id="IPR023374">
    <property type="entry name" value="AttH-like_dom_sf"/>
</dbReference>
<dbReference type="InterPro" id="IPR051385">
    <property type="entry name" value="Ceramide-binding_SVF1"/>
</dbReference>
<dbReference type="InterPro" id="IPR033394">
    <property type="entry name" value="Svf1-like_C"/>
</dbReference>
<dbReference type="InterPro" id="IPR013931">
    <property type="entry name" value="Svf1-like_N"/>
</dbReference>
<dbReference type="PANTHER" id="PTHR47107:SF1">
    <property type="entry name" value="CERAMIDE-BINDING PROTEIN SVF1-RELATED"/>
    <property type="match status" value="1"/>
</dbReference>
<dbReference type="PANTHER" id="PTHR47107">
    <property type="entry name" value="SVF1-LIKE PROTEIN YDR222W-RELATED"/>
    <property type="match status" value="1"/>
</dbReference>
<dbReference type="Pfam" id="PF08622">
    <property type="entry name" value="Svf1"/>
    <property type="match status" value="1"/>
</dbReference>
<dbReference type="Pfam" id="PF17187">
    <property type="entry name" value="Svf1_C"/>
    <property type="match status" value="1"/>
</dbReference>
<dbReference type="SUPFAM" id="SSF159245">
    <property type="entry name" value="AttH-like"/>
    <property type="match status" value="1"/>
</dbReference>
<name>SVF1_EMENI</name>